<organism>
    <name type="scientific">Paraburkholderia phymatum (strain DSM 17167 / CIP 108236 / LMG 21445 / STM815)</name>
    <name type="common">Burkholderia phymatum</name>
    <dbReference type="NCBI Taxonomy" id="391038"/>
    <lineage>
        <taxon>Bacteria</taxon>
        <taxon>Pseudomonadati</taxon>
        <taxon>Pseudomonadota</taxon>
        <taxon>Betaproteobacteria</taxon>
        <taxon>Burkholderiales</taxon>
        <taxon>Burkholderiaceae</taxon>
        <taxon>Paraburkholderia</taxon>
    </lineage>
</organism>
<accession>B2JHF8</accession>
<dbReference type="EC" id="6.3.2.4" evidence="2"/>
<dbReference type="EMBL" id="CP001043">
    <property type="protein sequence ID" value="ACC71843.1"/>
    <property type="molecule type" value="Genomic_DNA"/>
</dbReference>
<dbReference type="RefSeq" id="WP_012402042.1">
    <property type="nucleotide sequence ID" value="NC_010622.1"/>
</dbReference>
<dbReference type="SMR" id="B2JHF8"/>
<dbReference type="STRING" id="391038.Bphy_2671"/>
<dbReference type="KEGG" id="bph:Bphy_2671"/>
<dbReference type="eggNOG" id="COG1181">
    <property type="taxonomic scope" value="Bacteria"/>
</dbReference>
<dbReference type="HOGENOM" id="CLU_039268_1_2_4"/>
<dbReference type="OrthoDB" id="9813261at2"/>
<dbReference type="UniPathway" id="UPA00219"/>
<dbReference type="Proteomes" id="UP000001192">
    <property type="component" value="Chromosome 1"/>
</dbReference>
<dbReference type="GO" id="GO:0005829">
    <property type="term" value="C:cytosol"/>
    <property type="evidence" value="ECO:0007669"/>
    <property type="project" value="TreeGrafter"/>
</dbReference>
<dbReference type="GO" id="GO:0005524">
    <property type="term" value="F:ATP binding"/>
    <property type="evidence" value="ECO:0007669"/>
    <property type="project" value="UniProtKB-KW"/>
</dbReference>
<dbReference type="GO" id="GO:0008716">
    <property type="term" value="F:D-alanine-D-alanine ligase activity"/>
    <property type="evidence" value="ECO:0007669"/>
    <property type="project" value="UniProtKB-UniRule"/>
</dbReference>
<dbReference type="GO" id="GO:0046872">
    <property type="term" value="F:metal ion binding"/>
    <property type="evidence" value="ECO:0007669"/>
    <property type="project" value="UniProtKB-KW"/>
</dbReference>
<dbReference type="GO" id="GO:0071555">
    <property type="term" value="P:cell wall organization"/>
    <property type="evidence" value="ECO:0007669"/>
    <property type="project" value="UniProtKB-KW"/>
</dbReference>
<dbReference type="GO" id="GO:0009252">
    <property type="term" value="P:peptidoglycan biosynthetic process"/>
    <property type="evidence" value="ECO:0007669"/>
    <property type="project" value="UniProtKB-UniRule"/>
</dbReference>
<dbReference type="GO" id="GO:0008360">
    <property type="term" value="P:regulation of cell shape"/>
    <property type="evidence" value="ECO:0007669"/>
    <property type="project" value="UniProtKB-KW"/>
</dbReference>
<dbReference type="FunFam" id="3.30.1490.20:FF:000007">
    <property type="entry name" value="D-alanine--D-alanine ligase"/>
    <property type="match status" value="1"/>
</dbReference>
<dbReference type="FunFam" id="3.30.470.20:FF:000008">
    <property type="entry name" value="D-alanine--D-alanine ligase"/>
    <property type="match status" value="1"/>
</dbReference>
<dbReference type="FunFam" id="3.40.50.20:FF:000013">
    <property type="entry name" value="D-alanine--D-alanine ligase"/>
    <property type="match status" value="1"/>
</dbReference>
<dbReference type="Gene3D" id="3.40.50.20">
    <property type="match status" value="1"/>
</dbReference>
<dbReference type="Gene3D" id="3.30.1490.20">
    <property type="entry name" value="ATP-grasp fold, A domain"/>
    <property type="match status" value="1"/>
</dbReference>
<dbReference type="Gene3D" id="3.30.470.20">
    <property type="entry name" value="ATP-grasp fold, B domain"/>
    <property type="match status" value="1"/>
</dbReference>
<dbReference type="HAMAP" id="MF_00047">
    <property type="entry name" value="Dala_Dala_lig"/>
    <property type="match status" value="1"/>
</dbReference>
<dbReference type="InterPro" id="IPR011761">
    <property type="entry name" value="ATP-grasp"/>
</dbReference>
<dbReference type="InterPro" id="IPR013815">
    <property type="entry name" value="ATP_grasp_subdomain_1"/>
</dbReference>
<dbReference type="InterPro" id="IPR000291">
    <property type="entry name" value="D-Ala_lig_Van_CS"/>
</dbReference>
<dbReference type="InterPro" id="IPR005905">
    <property type="entry name" value="D_ala_D_ala"/>
</dbReference>
<dbReference type="InterPro" id="IPR011095">
    <property type="entry name" value="Dala_Dala_lig_C"/>
</dbReference>
<dbReference type="InterPro" id="IPR011127">
    <property type="entry name" value="Dala_Dala_lig_N"/>
</dbReference>
<dbReference type="InterPro" id="IPR016185">
    <property type="entry name" value="PreATP-grasp_dom_sf"/>
</dbReference>
<dbReference type="NCBIfam" id="TIGR01205">
    <property type="entry name" value="D_ala_D_alaTIGR"/>
    <property type="match status" value="1"/>
</dbReference>
<dbReference type="NCBIfam" id="NF002378">
    <property type="entry name" value="PRK01372.1"/>
    <property type="match status" value="1"/>
</dbReference>
<dbReference type="PANTHER" id="PTHR23132">
    <property type="entry name" value="D-ALANINE--D-ALANINE LIGASE"/>
    <property type="match status" value="1"/>
</dbReference>
<dbReference type="PANTHER" id="PTHR23132:SF23">
    <property type="entry name" value="D-ALANINE--D-ALANINE LIGASE B"/>
    <property type="match status" value="1"/>
</dbReference>
<dbReference type="Pfam" id="PF07478">
    <property type="entry name" value="Dala_Dala_lig_C"/>
    <property type="match status" value="1"/>
</dbReference>
<dbReference type="Pfam" id="PF01820">
    <property type="entry name" value="Dala_Dala_lig_N"/>
    <property type="match status" value="1"/>
</dbReference>
<dbReference type="PIRSF" id="PIRSF039102">
    <property type="entry name" value="Ddl/VanB"/>
    <property type="match status" value="1"/>
</dbReference>
<dbReference type="SUPFAM" id="SSF56059">
    <property type="entry name" value="Glutathione synthetase ATP-binding domain-like"/>
    <property type="match status" value="1"/>
</dbReference>
<dbReference type="SUPFAM" id="SSF52440">
    <property type="entry name" value="PreATP-grasp domain"/>
    <property type="match status" value="1"/>
</dbReference>
<dbReference type="PROSITE" id="PS50975">
    <property type="entry name" value="ATP_GRASP"/>
    <property type="match status" value="1"/>
</dbReference>
<dbReference type="PROSITE" id="PS00843">
    <property type="entry name" value="DALA_DALA_LIGASE_1"/>
    <property type="match status" value="1"/>
</dbReference>
<dbReference type="PROSITE" id="PS00844">
    <property type="entry name" value="DALA_DALA_LIGASE_2"/>
    <property type="match status" value="1"/>
</dbReference>
<proteinExistence type="inferred from homology"/>
<protein>
    <recommendedName>
        <fullName evidence="2">D-alanine--D-alanine ligase</fullName>
        <ecNumber evidence="2">6.3.2.4</ecNumber>
    </recommendedName>
    <alternativeName>
        <fullName evidence="2">D-Ala-D-Ala ligase</fullName>
    </alternativeName>
    <alternativeName>
        <fullName evidence="2">D-alanylalanine synthetase</fullName>
    </alternativeName>
</protein>
<feature type="chain" id="PRO_1000091167" description="D-alanine--D-alanine ligase">
    <location>
        <begin position="1"/>
        <end position="313"/>
    </location>
</feature>
<feature type="domain" description="ATP-grasp" evidence="2">
    <location>
        <begin position="108"/>
        <end position="308"/>
    </location>
</feature>
<feature type="binding site" evidence="2">
    <location>
        <begin position="138"/>
        <end position="193"/>
    </location>
    <ligand>
        <name>ATP</name>
        <dbReference type="ChEBI" id="CHEBI:30616"/>
    </ligand>
</feature>
<feature type="binding site" evidence="2">
    <location>
        <position position="262"/>
    </location>
    <ligand>
        <name>Mg(2+)</name>
        <dbReference type="ChEBI" id="CHEBI:18420"/>
        <label>1</label>
    </ligand>
</feature>
<feature type="binding site" evidence="2">
    <location>
        <position position="275"/>
    </location>
    <ligand>
        <name>Mg(2+)</name>
        <dbReference type="ChEBI" id="CHEBI:18420"/>
        <label>1</label>
    </ligand>
</feature>
<feature type="binding site" evidence="2">
    <location>
        <position position="275"/>
    </location>
    <ligand>
        <name>Mg(2+)</name>
        <dbReference type="ChEBI" id="CHEBI:18420"/>
        <label>2</label>
    </ligand>
</feature>
<feature type="binding site" evidence="2">
    <location>
        <position position="277"/>
    </location>
    <ligand>
        <name>Mg(2+)</name>
        <dbReference type="ChEBI" id="CHEBI:18420"/>
        <label>2</label>
    </ligand>
</feature>
<reference key="1">
    <citation type="journal article" date="2014" name="Stand. Genomic Sci.">
        <title>Complete genome sequence of Burkholderia phymatum STM815(T), a broad host range and efficient nitrogen-fixing symbiont of Mimosa species.</title>
        <authorList>
            <person name="Moulin L."/>
            <person name="Klonowska A."/>
            <person name="Caroline B."/>
            <person name="Booth K."/>
            <person name="Vriezen J.A."/>
            <person name="Melkonian R."/>
            <person name="James E.K."/>
            <person name="Young J.P."/>
            <person name="Bena G."/>
            <person name="Hauser L."/>
            <person name="Land M."/>
            <person name="Kyrpides N."/>
            <person name="Bruce D."/>
            <person name="Chain P."/>
            <person name="Copeland A."/>
            <person name="Pitluck S."/>
            <person name="Woyke T."/>
            <person name="Lizotte-Waniewski M."/>
            <person name="Bristow J."/>
            <person name="Riley M."/>
        </authorList>
    </citation>
    <scope>NUCLEOTIDE SEQUENCE [LARGE SCALE GENOMIC DNA]</scope>
    <source>
        <strain>DSM 17167 / CIP 108236 / LMG 21445 / STM815</strain>
    </source>
</reference>
<gene>
    <name evidence="2" type="primary">ddl</name>
    <name type="ordered locus">Bphy_2671</name>
</gene>
<keyword id="KW-0067">ATP-binding</keyword>
<keyword id="KW-0133">Cell shape</keyword>
<keyword id="KW-0961">Cell wall biogenesis/degradation</keyword>
<keyword id="KW-0963">Cytoplasm</keyword>
<keyword id="KW-0436">Ligase</keyword>
<keyword id="KW-0460">Magnesium</keyword>
<keyword id="KW-0464">Manganese</keyword>
<keyword id="KW-0479">Metal-binding</keyword>
<keyword id="KW-0547">Nucleotide-binding</keyword>
<keyword id="KW-0573">Peptidoglycan synthesis</keyword>
<keyword id="KW-1185">Reference proteome</keyword>
<comment type="function">
    <text evidence="2">Cell wall formation.</text>
</comment>
<comment type="catalytic activity">
    <reaction evidence="2">
        <text>2 D-alanine + ATP = D-alanyl-D-alanine + ADP + phosphate + H(+)</text>
        <dbReference type="Rhea" id="RHEA:11224"/>
        <dbReference type="ChEBI" id="CHEBI:15378"/>
        <dbReference type="ChEBI" id="CHEBI:30616"/>
        <dbReference type="ChEBI" id="CHEBI:43474"/>
        <dbReference type="ChEBI" id="CHEBI:57416"/>
        <dbReference type="ChEBI" id="CHEBI:57822"/>
        <dbReference type="ChEBI" id="CHEBI:456216"/>
        <dbReference type="EC" id="6.3.2.4"/>
    </reaction>
</comment>
<comment type="cofactor">
    <cofactor evidence="1">
        <name>Mg(2+)</name>
        <dbReference type="ChEBI" id="CHEBI:18420"/>
    </cofactor>
    <cofactor evidence="1">
        <name>Mn(2+)</name>
        <dbReference type="ChEBI" id="CHEBI:29035"/>
    </cofactor>
    <text evidence="1">Binds 2 magnesium or manganese ions per subunit.</text>
</comment>
<comment type="pathway">
    <text evidence="2">Cell wall biogenesis; peptidoglycan biosynthesis.</text>
</comment>
<comment type="subcellular location">
    <subcellularLocation>
        <location evidence="2">Cytoplasm</location>
    </subcellularLocation>
</comment>
<comment type="similarity">
    <text evidence="2">Belongs to the D-alanine--D-alanine ligase family.</text>
</comment>
<evidence type="ECO:0000250" key="1"/>
<evidence type="ECO:0000255" key="2">
    <source>
        <dbReference type="HAMAP-Rule" id="MF_00047"/>
    </source>
</evidence>
<sequence length="313" mass="33342">MSGIDPKSFGKVAVLLGGASAEREVSLNSGRLVLQGLRDAGVDAYAFDPAERPLAALKDEGFVRAFNALHGGYGENGQIQGALDFYGIRYTGSGVLGSALGLDKFRTKLVWQQLGIPTPPFEAVLRGDDYAARAQGIVAKLGLPLFVKPASEGSSVAVIKVKTADALVPALEEAVKFDKIVVVEKSIEGGGEYTACIAGDLDLPIIRIVPAGEFYDYHAKYIANDTQYMIPCGIAAEEEARLKKLARQAFDVLGCTDWGRADFMLDGEGNAYFLEVNTAPGMTDHSLPPKAARAVGISYQELVVKVLALTLKD</sequence>
<name>DDL_PARP8</name>